<dbReference type="EMBL" id="CP017625">
    <property type="protein sequence ID" value="AOW28786.1"/>
    <property type="molecule type" value="Genomic_DNA"/>
</dbReference>
<dbReference type="RefSeq" id="XP_710939.2">
    <property type="nucleotide sequence ID" value="XM_705847.2"/>
</dbReference>
<dbReference type="SMR" id="Q59MI8"/>
<dbReference type="FunCoup" id="Q59MI8">
    <property type="interactions" value="551"/>
</dbReference>
<dbReference type="STRING" id="237561.Q59MI8"/>
<dbReference type="EnsemblFungi" id="C3_07890W_A-T">
    <property type="protein sequence ID" value="C3_07890W_A-T-p1"/>
    <property type="gene ID" value="C3_07890W_A"/>
</dbReference>
<dbReference type="GeneID" id="3647469"/>
<dbReference type="KEGG" id="cal:CAALFM_C307890WA"/>
<dbReference type="CGD" id="CAL0000198973">
    <property type="gene designation" value="TIM8"/>
</dbReference>
<dbReference type="VEuPathDB" id="FungiDB:C3_07890W_A"/>
<dbReference type="eggNOG" id="KOG3489">
    <property type="taxonomic scope" value="Eukaryota"/>
</dbReference>
<dbReference type="HOGENOM" id="CLU_1992318_0_0_1"/>
<dbReference type="InParanoid" id="Q59MI8"/>
<dbReference type="OMA" id="WDVCFAD"/>
<dbReference type="OrthoDB" id="344165at2759"/>
<dbReference type="Proteomes" id="UP000000559">
    <property type="component" value="Chromosome 3"/>
</dbReference>
<dbReference type="GO" id="GO:0005743">
    <property type="term" value="C:mitochondrial inner membrane"/>
    <property type="evidence" value="ECO:0007669"/>
    <property type="project" value="UniProtKB-SubCell"/>
</dbReference>
<dbReference type="GO" id="GO:0042719">
    <property type="term" value="C:mitochondrial intermembrane space protein transporter complex"/>
    <property type="evidence" value="ECO:0007669"/>
    <property type="project" value="EnsemblFungi"/>
</dbReference>
<dbReference type="GO" id="GO:0046872">
    <property type="term" value="F:metal ion binding"/>
    <property type="evidence" value="ECO:0007669"/>
    <property type="project" value="UniProtKB-KW"/>
</dbReference>
<dbReference type="GO" id="GO:0140318">
    <property type="term" value="F:protein transporter activity"/>
    <property type="evidence" value="ECO:0007669"/>
    <property type="project" value="EnsemblFungi"/>
</dbReference>
<dbReference type="GO" id="GO:0045039">
    <property type="term" value="P:protein insertion into mitochondrial inner membrane"/>
    <property type="evidence" value="ECO:0007669"/>
    <property type="project" value="EnsemblFungi"/>
</dbReference>
<dbReference type="Gene3D" id="1.10.287.810">
    <property type="entry name" value="Mitochondrial import inner membrane translocase subunit tim13 like domains"/>
    <property type="match status" value="1"/>
</dbReference>
<dbReference type="InterPro" id="IPR004217">
    <property type="entry name" value="Tim10-like"/>
</dbReference>
<dbReference type="InterPro" id="IPR035427">
    <property type="entry name" value="Tim10-like_dom_sf"/>
</dbReference>
<dbReference type="Pfam" id="PF02953">
    <property type="entry name" value="zf-Tim10_DDP"/>
    <property type="match status" value="1"/>
</dbReference>
<dbReference type="SUPFAM" id="SSF144122">
    <property type="entry name" value="Tim10-like"/>
    <property type="match status" value="1"/>
</dbReference>
<name>TIM8_CANAL</name>
<feature type="chain" id="PRO_0000228029" description="Mitochondrial import inner membrane translocase subunit TIM8">
    <location>
        <begin position="1"/>
        <end position="88"/>
    </location>
</feature>
<feature type="short sequence motif" description="Twin CX3C motif">
    <location>
        <begin position="44"/>
        <end position="70"/>
    </location>
</feature>
<feature type="disulfide bond" evidence="1">
    <location>
        <begin position="44"/>
        <end position="70"/>
    </location>
</feature>
<feature type="disulfide bond" evidence="1">
    <location>
        <begin position="48"/>
        <end position="66"/>
    </location>
</feature>
<sequence length="88" mass="9876">MSSLSTTAIQSLDEASRKEIMQFVESEQSKSKVQSSIHNFTDMCFKKCNKDKPITSATLDGQEEACLKNCLNRFLDTNIKVVEALQGR</sequence>
<reference key="1">
    <citation type="journal article" date="2004" name="Proc. Natl. Acad. Sci. U.S.A.">
        <title>The diploid genome sequence of Candida albicans.</title>
        <authorList>
            <person name="Jones T."/>
            <person name="Federspiel N.A."/>
            <person name="Chibana H."/>
            <person name="Dungan J."/>
            <person name="Kalman S."/>
            <person name="Magee B.B."/>
            <person name="Newport G."/>
            <person name="Thorstenson Y.R."/>
            <person name="Agabian N."/>
            <person name="Magee P.T."/>
            <person name="Davis R.W."/>
            <person name="Scherer S."/>
        </authorList>
    </citation>
    <scope>NUCLEOTIDE SEQUENCE [LARGE SCALE GENOMIC DNA]</scope>
    <source>
        <strain>SC5314 / ATCC MYA-2876</strain>
    </source>
</reference>
<reference key="2">
    <citation type="journal article" date="2007" name="Genome Biol.">
        <title>Assembly of the Candida albicans genome into sixteen supercontigs aligned on the eight chromosomes.</title>
        <authorList>
            <person name="van het Hoog M."/>
            <person name="Rast T.J."/>
            <person name="Martchenko M."/>
            <person name="Grindle S."/>
            <person name="Dignard D."/>
            <person name="Hogues H."/>
            <person name="Cuomo C."/>
            <person name="Berriman M."/>
            <person name="Scherer S."/>
            <person name="Magee B.B."/>
            <person name="Whiteway M."/>
            <person name="Chibana H."/>
            <person name="Nantel A."/>
            <person name="Magee P.T."/>
        </authorList>
    </citation>
    <scope>GENOME REANNOTATION</scope>
    <source>
        <strain>SC5314 / ATCC MYA-2876</strain>
    </source>
</reference>
<reference key="3">
    <citation type="journal article" date="2013" name="Genome Biol.">
        <title>Assembly of a phased diploid Candida albicans genome facilitates allele-specific measurements and provides a simple model for repeat and indel structure.</title>
        <authorList>
            <person name="Muzzey D."/>
            <person name="Schwartz K."/>
            <person name="Weissman J.S."/>
            <person name="Sherlock G."/>
        </authorList>
    </citation>
    <scope>NUCLEOTIDE SEQUENCE [LARGE SCALE GENOMIC DNA]</scope>
    <scope>GENOME REANNOTATION</scope>
    <source>
        <strain>SC5314 / ATCC MYA-2876</strain>
    </source>
</reference>
<keyword id="KW-0143">Chaperone</keyword>
<keyword id="KW-1015">Disulfide bond</keyword>
<keyword id="KW-0472">Membrane</keyword>
<keyword id="KW-0479">Metal-binding</keyword>
<keyword id="KW-0496">Mitochondrion</keyword>
<keyword id="KW-0999">Mitochondrion inner membrane</keyword>
<keyword id="KW-0653">Protein transport</keyword>
<keyword id="KW-1185">Reference proteome</keyword>
<keyword id="KW-0811">Translocation</keyword>
<keyword id="KW-0813">Transport</keyword>
<keyword id="KW-0862">Zinc</keyword>
<gene>
    <name type="primary">TIM8</name>
    <name type="ordered locus">CAALFM_C307890WA</name>
    <name type="ORF">CaO19.6183</name>
</gene>
<protein>
    <recommendedName>
        <fullName>Mitochondrial import inner membrane translocase subunit TIM8</fullName>
    </recommendedName>
</protein>
<comment type="function">
    <text evidence="1">Mitochondrial intermembrane chaperone that participates in the import and insertion of some multi-pass transmembrane proteins into the mitochondrial inner membrane. Also required for the transfer of beta-barrel precursors from the TOM complex to the sorting and assembly machinery (SAM complex) of the outer membrane. Acts as a chaperone-like protein that protects the hydrophobic precursors from aggregation and guide them through the mitochondrial intermembrane space. The TIM8-TIM13 complex is non essential and only mediates the import of few proteins, while the predominant TIM9-TIM10 70 kDa complex is crucial and mediates the import of much more proteins (By similarity).</text>
</comment>
<comment type="subunit">
    <text evidence="1">Heterohexamer; composed of 3 copies of TIM8 and 3 copies of TIM13, named soluble 70 kDa complex. Associates with the TIM22 complex, whose core is composed of TIM22 and TIM54. Interacts with the transmembrane regions of multi-pass transmembrane proteins in transit (By similarity).</text>
</comment>
<comment type="subcellular location">
    <subcellularLocation>
        <location evidence="1">Mitochondrion inner membrane</location>
        <topology evidence="1">Peripheral membrane protein</topology>
        <orientation evidence="1">Intermembrane side</orientation>
    </subcellularLocation>
</comment>
<comment type="domain">
    <text evidence="1">The twin CX3C motif contains 4 conserved Cys residues that form 2 disulfide bonds in the mitochondrial intermembrane space. However, during the transit of TIM8 from cytoplasm into mitochondrion, the Cys residues probably coordinate zinc, thereby preventing folding and allowing its transfer across mitochondrial outer membrane (By similarity).</text>
</comment>
<comment type="similarity">
    <text evidence="2">Belongs to the small Tim family.</text>
</comment>
<evidence type="ECO:0000250" key="1"/>
<evidence type="ECO:0000305" key="2"/>
<accession>Q59MI8</accession>
<accession>A0A1D8PKX0</accession>
<organism>
    <name type="scientific">Candida albicans (strain SC5314 / ATCC MYA-2876)</name>
    <name type="common">Yeast</name>
    <dbReference type="NCBI Taxonomy" id="237561"/>
    <lineage>
        <taxon>Eukaryota</taxon>
        <taxon>Fungi</taxon>
        <taxon>Dikarya</taxon>
        <taxon>Ascomycota</taxon>
        <taxon>Saccharomycotina</taxon>
        <taxon>Pichiomycetes</taxon>
        <taxon>Debaryomycetaceae</taxon>
        <taxon>Candida/Lodderomyces clade</taxon>
        <taxon>Candida</taxon>
    </lineage>
</organism>
<proteinExistence type="inferred from homology"/>